<protein>
    <recommendedName>
        <fullName evidence="1">Serine--tRNA ligase</fullName>
        <ecNumber evidence="1">6.1.1.11</ecNumber>
    </recommendedName>
    <alternativeName>
        <fullName evidence="1">Seryl-tRNA synthetase</fullName>
        <shortName evidence="1">SerRS</shortName>
    </alternativeName>
    <alternativeName>
        <fullName evidence="1">Seryl-tRNA(Ser/Sec) synthetase</fullName>
    </alternativeName>
</protein>
<evidence type="ECO:0000255" key="1">
    <source>
        <dbReference type="HAMAP-Rule" id="MF_00176"/>
    </source>
</evidence>
<reference key="1">
    <citation type="journal article" date="2005" name="Nat. Biotechnol.">
        <title>The genome sequence of the ethanologenic bacterium Zymomonas mobilis ZM4.</title>
        <authorList>
            <person name="Seo J.-S."/>
            <person name="Chong H."/>
            <person name="Park H.S."/>
            <person name="Yoon K.-O."/>
            <person name="Jung C."/>
            <person name="Kim J.J."/>
            <person name="Hong J.H."/>
            <person name="Kim H."/>
            <person name="Kim J.-H."/>
            <person name="Kil J.-I."/>
            <person name="Park C.J."/>
            <person name="Oh H.-M."/>
            <person name="Lee J.-S."/>
            <person name="Jin S.-J."/>
            <person name="Um H.-W."/>
            <person name="Lee H.-J."/>
            <person name="Oh S.-J."/>
            <person name="Kim J.Y."/>
            <person name="Kang H.L."/>
            <person name="Lee S.Y."/>
            <person name="Lee K.J."/>
            <person name="Kang H.S."/>
        </authorList>
    </citation>
    <scope>NUCLEOTIDE SEQUENCE [LARGE SCALE GENOMIC DNA]</scope>
    <source>
        <strain>ATCC 31821 / ZM4 / CP4</strain>
    </source>
</reference>
<keyword id="KW-0030">Aminoacyl-tRNA synthetase</keyword>
<keyword id="KW-0067">ATP-binding</keyword>
<keyword id="KW-0963">Cytoplasm</keyword>
<keyword id="KW-0436">Ligase</keyword>
<keyword id="KW-0547">Nucleotide-binding</keyword>
<keyword id="KW-0648">Protein biosynthesis</keyword>
<keyword id="KW-1185">Reference proteome</keyword>
<accession>Q5NNV0</accession>
<comment type="function">
    <text evidence="1">Catalyzes the attachment of serine to tRNA(Ser). Is also able to aminoacylate tRNA(Sec) with serine, to form the misacylated tRNA L-seryl-tRNA(Sec), which will be further converted into selenocysteinyl-tRNA(Sec).</text>
</comment>
<comment type="catalytic activity">
    <reaction evidence="1">
        <text>tRNA(Ser) + L-serine + ATP = L-seryl-tRNA(Ser) + AMP + diphosphate + H(+)</text>
        <dbReference type="Rhea" id="RHEA:12292"/>
        <dbReference type="Rhea" id="RHEA-COMP:9669"/>
        <dbReference type="Rhea" id="RHEA-COMP:9703"/>
        <dbReference type="ChEBI" id="CHEBI:15378"/>
        <dbReference type="ChEBI" id="CHEBI:30616"/>
        <dbReference type="ChEBI" id="CHEBI:33019"/>
        <dbReference type="ChEBI" id="CHEBI:33384"/>
        <dbReference type="ChEBI" id="CHEBI:78442"/>
        <dbReference type="ChEBI" id="CHEBI:78533"/>
        <dbReference type="ChEBI" id="CHEBI:456215"/>
        <dbReference type="EC" id="6.1.1.11"/>
    </reaction>
</comment>
<comment type="catalytic activity">
    <reaction evidence="1">
        <text>tRNA(Sec) + L-serine + ATP = L-seryl-tRNA(Sec) + AMP + diphosphate + H(+)</text>
        <dbReference type="Rhea" id="RHEA:42580"/>
        <dbReference type="Rhea" id="RHEA-COMP:9742"/>
        <dbReference type="Rhea" id="RHEA-COMP:10128"/>
        <dbReference type="ChEBI" id="CHEBI:15378"/>
        <dbReference type="ChEBI" id="CHEBI:30616"/>
        <dbReference type="ChEBI" id="CHEBI:33019"/>
        <dbReference type="ChEBI" id="CHEBI:33384"/>
        <dbReference type="ChEBI" id="CHEBI:78442"/>
        <dbReference type="ChEBI" id="CHEBI:78533"/>
        <dbReference type="ChEBI" id="CHEBI:456215"/>
        <dbReference type="EC" id="6.1.1.11"/>
    </reaction>
</comment>
<comment type="pathway">
    <text evidence="1">Aminoacyl-tRNA biosynthesis; selenocysteinyl-tRNA(Sec) biosynthesis; L-seryl-tRNA(Sec) from L-serine and tRNA(Sec): step 1/1.</text>
</comment>
<comment type="subunit">
    <text evidence="1">Homodimer. The tRNA molecule binds across the dimer.</text>
</comment>
<comment type="subcellular location">
    <subcellularLocation>
        <location evidence="1">Cytoplasm</location>
    </subcellularLocation>
</comment>
<comment type="domain">
    <text evidence="1">Consists of two distinct domains, a catalytic core and a N-terminal extension that is involved in tRNA binding.</text>
</comment>
<comment type="similarity">
    <text evidence="1">Belongs to the class-II aminoacyl-tRNA synthetase family. Type-1 seryl-tRNA synthetase subfamily.</text>
</comment>
<organism>
    <name type="scientific">Zymomonas mobilis subsp. mobilis (strain ATCC 31821 / ZM4 / CP4)</name>
    <dbReference type="NCBI Taxonomy" id="264203"/>
    <lineage>
        <taxon>Bacteria</taxon>
        <taxon>Pseudomonadati</taxon>
        <taxon>Pseudomonadota</taxon>
        <taxon>Alphaproteobacteria</taxon>
        <taxon>Sphingomonadales</taxon>
        <taxon>Zymomonadaceae</taxon>
        <taxon>Zymomonas</taxon>
    </lineage>
</organism>
<name>SYS_ZYMMO</name>
<dbReference type="EC" id="6.1.1.11" evidence="1"/>
<dbReference type="EMBL" id="AE008692">
    <property type="protein sequence ID" value="AAV89610.1"/>
    <property type="molecule type" value="Genomic_DNA"/>
</dbReference>
<dbReference type="RefSeq" id="WP_011240838.1">
    <property type="nucleotide sequence ID" value="NZ_CP035711.1"/>
</dbReference>
<dbReference type="SMR" id="Q5NNV0"/>
<dbReference type="STRING" id="264203.ZMO0986"/>
<dbReference type="KEGG" id="zmo:ZMO0986"/>
<dbReference type="eggNOG" id="COG0172">
    <property type="taxonomic scope" value="Bacteria"/>
</dbReference>
<dbReference type="HOGENOM" id="CLU_023797_1_1_5"/>
<dbReference type="UniPathway" id="UPA00906">
    <property type="reaction ID" value="UER00895"/>
</dbReference>
<dbReference type="Proteomes" id="UP000001173">
    <property type="component" value="Chromosome"/>
</dbReference>
<dbReference type="GO" id="GO:0005737">
    <property type="term" value="C:cytoplasm"/>
    <property type="evidence" value="ECO:0007669"/>
    <property type="project" value="UniProtKB-SubCell"/>
</dbReference>
<dbReference type="GO" id="GO:0005524">
    <property type="term" value="F:ATP binding"/>
    <property type="evidence" value="ECO:0007669"/>
    <property type="project" value="UniProtKB-UniRule"/>
</dbReference>
<dbReference type="GO" id="GO:0004828">
    <property type="term" value="F:serine-tRNA ligase activity"/>
    <property type="evidence" value="ECO:0007669"/>
    <property type="project" value="UniProtKB-UniRule"/>
</dbReference>
<dbReference type="GO" id="GO:0016260">
    <property type="term" value="P:selenocysteine biosynthetic process"/>
    <property type="evidence" value="ECO:0007669"/>
    <property type="project" value="UniProtKB-UniRule"/>
</dbReference>
<dbReference type="GO" id="GO:0006434">
    <property type="term" value="P:seryl-tRNA aminoacylation"/>
    <property type="evidence" value="ECO:0007669"/>
    <property type="project" value="UniProtKB-UniRule"/>
</dbReference>
<dbReference type="CDD" id="cd00770">
    <property type="entry name" value="SerRS_core"/>
    <property type="match status" value="1"/>
</dbReference>
<dbReference type="Gene3D" id="3.30.930.10">
    <property type="entry name" value="Bira Bifunctional Protein, Domain 2"/>
    <property type="match status" value="1"/>
</dbReference>
<dbReference type="Gene3D" id="1.10.287.40">
    <property type="entry name" value="Serine-tRNA synthetase, tRNA binding domain"/>
    <property type="match status" value="1"/>
</dbReference>
<dbReference type="HAMAP" id="MF_00176">
    <property type="entry name" value="Ser_tRNA_synth_type1"/>
    <property type="match status" value="1"/>
</dbReference>
<dbReference type="InterPro" id="IPR002314">
    <property type="entry name" value="aa-tRNA-synt_IIb"/>
</dbReference>
<dbReference type="InterPro" id="IPR006195">
    <property type="entry name" value="aa-tRNA-synth_II"/>
</dbReference>
<dbReference type="InterPro" id="IPR045864">
    <property type="entry name" value="aa-tRNA-synth_II/BPL/LPL"/>
</dbReference>
<dbReference type="InterPro" id="IPR002317">
    <property type="entry name" value="Ser-tRNA-ligase_type_1"/>
</dbReference>
<dbReference type="InterPro" id="IPR015866">
    <property type="entry name" value="Ser-tRNA-synth_1_N"/>
</dbReference>
<dbReference type="InterPro" id="IPR042103">
    <property type="entry name" value="SerRS_1_N_sf"/>
</dbReference>
<dbReference type="InterPro" id="IPR033729">
    <property type="entry name" value="SerRS_core"/>
</dbReference>
<dbReference type="InterPro" id="IPR010978">
    <property type="entry name" value="tRNA-bd_arm"/>
</dbReference>
<dbReference type="NCBIfam" id="TIGR00414">
    <property type="entry name" value="serS"/>
    <property type="match status" value="1"/>
</dbReference>
<dbReference type="PANTHER" id="PTHR43697:SF1">
    <property type="entry name" value="SERINE--TRNA LIGASE"/>
    <property type="match status" value="1"/>
</dbReference>
<dbReference type="PANTHER" id="PTHR43697">
    <property type="entry name" value="SERYL-TRNA SYNTHETASE"/>
    <property type="match status" value="1"/>
</dbReference>
<dbReference type="Pfam" id="PF02403">
    <property type="entry name" value="Seryl_tRNA_N"/>
    <property type="match status" value="1"/>
</dbReference>
<dbReference type="Pfam" id="PF00587">
    <property type="entry name" value="tRNA-synt_2b"/>
    <property type="match status" value="1"/>
</dbReference>
<dbReference type="PIRSF" id="PIRSF001529">
    <property type="entry name" value="Ser-tRNA-synth_IIa"/>
    <property type="match status" value="1"/>
</dbReference>
<dbReference type="PRINTS" id="PR00981">
    <property type="entry name" value="TRNASYNTHSER"/>
</dbReference>
<dbReference type="SUPFAM" id="SSF55681">
    <property type="entry name" value="Class II aaRS and biotin synthetases"/>
    <property type="match status" value="1"/>
</dbReference>
<dbReference type="SUPFAM" id="SSF46589">
    <property type="entry name" value="tRNA-binding arm"/>
    <property type="match status" value="1"/>
</dbReference>
<dbReference type="PROSITE" id="PS50862">
    <property type="entry name" value="AA_TRNA_LIGASE_II"/>
    <property type="match status" value="1"/>
</dbReference>
<proteinExistence type="inferred from homology"/>
<sequence length="425" mass="47730">MHDIRLIRSEPENFDKALSRRGFEPVSKTILEMDGERRTLALELQTLQTKRNEVSRQIGQAMKQGEKDKAEEMKAEVSAIKEKMAALEGEEAALGDKLQRFLSTIPNLAAEDVPEGKDEQDNKEVFRWGEPRQFSFKPKEHADFAPALGLDFDTAAAMSGARFALMKGAMARLNRAIGQYMLDCQTEKNGFTEIAPPLLVRDHALFGTGQLPKFEEDLFHTTDDRWLIPTAEVCLTNIVRESILDEKALPLRFTALTPCFRAEAGAAGRDTRGLIRQHQFDKVEMVAITTPEQSTAEQMRMVECAEQILQNLKLPYRRVLLCTGDMGFSATRTYDLEVWLPGQNCYREISSISDCGAFQARRMNTRYRPEEGKGNAAVHTLNGSGLAVGRTLVAILENYQEEDGTVTIPEVLHPYMNGITKLEII</sequence>
<gene>
    <name evidence="1" type="primary">serS</name>
    <name type="ordered locus">ZMO0986</name>
</gene>
<feature type="chain" id="PRO_0000122168" description="Serine--tRNA ligase">
    <location>
        <begin position="1"/>
        <end position="425"/>
    </location>
</feature>
<feature type="binding site" evidence="1">
    <location>
        <begin position="230"/>
        <end position="232"/>
    </location>
    <ligand>
        <name>L-serine</name>
        <dbReference type="ChEBI" id="CHEBI:33384"/>
    </ligand>
</feature>
<feature type="binding site" evidence="1">
    <location>
        <begin position="261"/>
        <end position="263"/>
    </location>
    <ligand>
        <name>ATP</name>
        <dbReference type="ChEBI" id="CHEBI:30616"/>
    </ligand>
</feature>
<feature type="binding site" evidence="1">
    <location>
        <position position="284"/>
    </location>
    <ligand>
        <name>L-serine</name>
        <dbReference type="ChEBI" id="CHEBI:33384"/>
    </ligand>
</feature>
<feature type="binding site" evidence="1">
    <location>
        <begin position="348"/>
        <end position="351"/>
    </location>
    <ligand>
        <name>ATP</name>
        <dbReference type="ChEBI" id="CHEBI:30616"/>
    </ligand>
</feature>
<feature type="binding site" evidence="1">
    <location>
        <position position="384"/>
    </location>
    <ligand>
        <name>L-serine</name>
        <dbReference type="ChEBI" id="CHEBI:33384"/>
    </ligand>
</feature>